<reference key="1">
    <citation type="submission" date="2007-09" db="EMBL/GenBank/DDBJ databases">
        <title>Complete genome sequence of Rickettsia rickettsii.</title>
        <authorList>
            <person name="Madan A."/>
            <person name="Fahey J."/>
            <person name="Helton E."/>
            <person name="Ketteman M."/>
            <person name="Madan A."/>
            <person name="Rodrigues S."/>
            <person name="Sanchez A."/>
            <person name="Dasch G."/>
            <person name="Eremeeva M."/>
        </authorList>
    </citation>
    <scope>NUCLEOTIDE SEQUENCE [LARGE SCALE GENOMIC DNA]</scope>
    <source>
        <strain>Sheila Smith</strain>
    </source>
</reference>
<comment type="function">
    <text evidence="1">Binds directly to 23S rRNA. The L1 stalk is quite mobile in the ribosome, and is involved in E site tRNA release.</text>
</comment>
<comment type="function">
    <text evidence="1">Protein L1 is also a translational repressor protein, it controls the translation of the L11 operon by binding to its mRNA.</text>
</comment>
<comment type="subunit">
    <text evidence="1">Part of the 50S ribosomal subunit.</text>
</comment>
<comment type="similarity">
    <text evidence="1">Belongs to the universal ribosomal protein uL1 family.</text>
</comment>
<name>RL1_RICRS</name>
<keyword id="KW-0678">Repressor</keyword>
<keyword id="KW-0687">Ribonucleoprotein</keyword>
<keyword id="KW-0689">Ribosomal protein</keyword>
<keyword id="KW-0694">RNA-binding</keyword>
<keyword id="KW-0699">rRNA-binding</keyword>
<keyword id="KW-0810">Translation regulation</keyword>
<keyword id="KW-0820">tRNA-binding</keyword>
<organism>
    <name type="scientific">Rickettsia rickettsii (strain Sheila Smith)</name>
    <dbReference type="NCBI Taxonomy" id="392021"/>
    <lineage>
        <taxon>Bacteria</taxon>
        <taxon>Pseudomonadati</taxon>
        <taxon>Pseudomonadota</taxon>
        <taxon>Alphaproteobacteria</taxon>
        <taxon>Rickettsiales</taxon>
        <taxon>Rickettsiaceae</taxon>
        <taxon>Rickettsieae</taxon>
        <taxon>Rickettsia</taxon>
        <taxon>spotted fever group</taxon>
    </lineage>
</organism>
<accession>A8GQW1</accession>
<proteinExistence type="inferred from homology"/>
<dbReference type="EMBL" id="CP000848">
    <property type="protein sequence ID" value="ABV75786.1"/>
    <property type="molecule type" value="Genomic_DNA"/>
</dbReference>
<dbReference type="RefSeq" id="WP_012150394.1">
    <property type="nucleotide sequence ID" value="NZ_CP121767.1"/>
</dbReference>
<dbReference type="SMR" id="A8GQW1"/>
<dbReference type="GeneID" id="79936970"/>
<dbReference type="KEGG" id="rri:A1G_01020"/>
<dbReference type="HOGENOM" id="CLU_062853_0_0_5"/>
<dbReference type="Proteomes" id="UP000006832">
    <property type="component" value="Chromosome"/>
</dbReference>
<dbReference type="GO" id="GO:0015934">
    <property type="term" value="C:large ribosomal subunit"/>
    <property type="evidence" value="ECO:0007669"/>
    <property type="project" value="InterPro"/>
</dbReference>
<dbReference type="GO" id="GO:0019843">
    <property type="term" value="F:rRNA binding"/>
    <property type="evidence" value="ECO:0007669"/>
    <property type="project" value="UniProtKB-UniRule"/>
</dbReference>
<dbReference type="GO" id="GO:0003735">
    <property type="term" value="F:structural constituent of ribosome"/>
    <property type="evidence" value="ECO:0007669"/>
    <property type="project" value="InterPro"/>
</dbReference>
<dbReference type="GO" id="GO:0000049">
    <property type="term" value="F:tRNA binding"/>
    <property type="evidence" value="ECO:0007669"/>
    <property type="project" value="UniProtKB-KW"/>
</dbReference>
<dbReference type="GO" id="GO:0006417">
    <property type="term" value="P:regulation of translation"/>
    <property type="evidence" value="ECO:0007669"/>
    <property type="project" value="UniProtKB-KW"/>
</dbReference>
<dbReference type="GO" id="GO:0006412">
    <property type="term" value="P:translation"/>
    <property type="evidence" value="ECO:0007669"/>
    <property type="project" value="UniProtKB-UniRule"/>
</dbReference>
<dbReference type="CDD" id="cd00403">
    <property type="entry name" value="Ribosomal_L1"/>
    <property type="match status" value="1"/>
</dbReference>
<dbReference type="FunFam" id="3.40.50.790:FF:000001">
    <property type="entry name" value="50S ribosomal protein L1"/>
    <property type="match status" value="1"/>
</dbReference>
<dbReference type="Gene3D" id="3.30.190.20">
    <property type="match status" value="1"/>
</dbReference>
<dbReference type="Gene3D" id="3.40.50.790">
    <property type="match status" value="1"/>
</dbReference>
<dbReference type="HAMAP" id="MF_01318_B">
    <property type="entry name" value="Ribosomal_uL1_B"/>
    <property type="match status" value="1"/>
</dbReference>
<dbReference type="InterPro" id="IPR005878">
    <property type="entry name" value="Ribosom_uL1_bac-type"/>
</dbReference>
<dbReference type="InterPro" id="IPR002143">
    <property type="entry name" value="Ribosomal_uL1"/>
</dbReference>
<dbReference type="InterPro" id="IPR023674">
    <property type="entry name" value="Ribosomal_uL1-like"/>
</dbReference>
<dbReference type="InterPro" id="IPR028364">
    <property type="entry name" value="Ribosomal_uL1/biogenesis"/>
</dbReference>
<dbReference type="InterPro" id="IPR016095">
    <property type="entry name" value="Ribosomal_uL1_3-a/b-sand"/>
</dbReference>
<dbReference type="InterPro" id="IPR023673">
    <property type="entry name" value="Ribosomal_uL1_CS"/>
</dbReference>
<dbReference type="NCBIfam" id="TIGR01169">
    <property type="entry name" value="rplA_bact"/>
    <property type="match status" value="1"/>
</dbReference>
<dbReference type="PANTHER" id="PTHR36427">
    <property type="entry name" value="54S RIBOSOMAL PROTEIN L1, MITOCHONDRIAL"/>
    <property type="match status" value="1"/>
</dbReference>
<dbReference type="PANTHER" id="PTHR36427:SF3">
    <property type="entry name" value="LARGE RIBOSOMAL SUBUNIT PROTEIN UL1M"/>
    <property type="match status" value="1"/>
</dbReference>
<dbReference type="Pfam" id="PF00687">
    <property type="entry name" value="Ribosomal_L1"/>
    <property type="match status" value="1"/>
</dbReference>
<dbReference type="PIRSF" id="PIRSF002155">
    <property type="entry name" value="Ribosomal_L1"/>
    <property type="match status" value="1"/>
</dbReference>
<dbReference type="SUPFAM" id="SSF56808">
    <property type="entry name" value="Ribosomal protein L1"/>
    <property type="match status" value="1"/>
</dbReference>
<dbReference type="PROSITE" id="PS01199">
    <property type="entry name" value="RIBOSOMAL_L1"/>
    <property type="match status" value="1"/>
</dbReference>
<feature type="chain" id="PRO_1000051920" description="Large ribosomal subunit protein uL1">
    <location>
        <begin position="1"/>
        <end position="239"/>
    </location>
</feature>
<sequence length="239" mass="25502">MSNKKDIAVKISGGKKIREAREKVKSDTLYNLTNAVERLKSASYVKFDPTLEIVMKLGIDSRHSDQMVRGVVNLPAGTGKTVRVAVICKEEREEEAKSAGADLVGSTNIIDEIKAGKINFDVCIATPDVMAAIGSVARILGPKGLMPNPKLGTVTLDIKNAIKNAKSGQVEYRAEKAGIIHAGLGKLSFSDQDLLKNLNAFIEAVIKAKPAGLKGSYLKAMYLSSTMGASVQIDLTSIA</sequence>
<protein>
    <recommendedName>
        <fullName evidence="1">Large ribosomal subunit protein uL1</fullName>
    </recommendedName>
    <alternativeName>
        <fullName evidence="2">50S ribosomal protein L1</fullName>
    </alternativeName>
</protein>
<evidence type="ECO:0000255" key="1">
    <source>
        <dbReference type="HAMAP-Rule" id="MF_01318"/>
    </source>
</evidence>
<evidence type="ECO:0000305" key="2"/>
<gene>
    <name evidence="1" type="primary">rplA</name>
    <name type="ordered locus">A1G_01020</name>
</gene>